<reference key="1">
    <citation type="journal article" date="1995" name="J. Biol. Chem.">
        <title>Molecular cloning of bomapin (protease inhibitor 10), a novel human serpin that is expressed specifically in the bone marrow.</title>
        <authorList>
            <person name="Riewald M."/>
            <person name="Schleef R.R."/>
        </authorList>
    </citation>
    <scope>NUCLEOTIDE SEQUENCE [MRNA]</scope>
    <scope>FUNCTION</scope>
    <scope>TISSUE SPECIFICITY</scope>
    <source>
        <tissue>Bone marrow</tissue>
    </source>
</reference>
<reference key="2">
    <citation type="journal article" date="2004" name="Genome Res.">
        <title>The status, quality, and expansion of the NIH full-length cDNA project: the Mammalian Gene Collection (MGC).</title>
        <authorList>
            <consortium name="The MGC Project Team"/>
        </authorList>
    </citation>
    <scope>NUCLEOTIDE SEQUENCE [LARGE SCALE MRNA]</scope>
    <scope>VARIANT ASN-360</scope>
</reference>
<reference key="3">
    <citation type="journal article" date="1999" name="J. Biol. Chem.">
        <title>Identification of a nuclear targeting domain in the insertion between helices C and D in protease inhibitor-10.</title>
        <authorList>
            <person name="Chuang T.L."/>
            <person name="Schleef R.R."/>
        </authorList>
    </citation>
    <scope>SUBCELLULAR LOCATION</scope>
    <scope>MUTAGENESIS OF 74-LYS--LYS-78</scope>
</reference>
<reference key="4">
    <citation type="journal article" date="2000" name="J. Biol. Chem.">
        <title>Protease inhibitor 10 inhibits tumor necrosis factor alpha -induced cell death. Evidence for the formation of intracellular high M(r) protease inhibitor 10-containing complexes.</title>
        <authorList>
            <person name="Schleef R.R."/>
            <person name="Chuang T.L."/>
        </authorList>
    </citation>
    <scope>FUNCTION</scope>
    <scope>SUBCELLULAR LOCATION</scope>
</reference>
<reference key="5">
    <citation type="journal article" date="2010" name="BMC Cell Biol.">
        <title>Bomapin is a redox-sensitive nuclear serpin that affects responsiveness of myeloid progenitor cells to growth environment.</title>
        <authorList>
            <person name="Przygodzka P."/>
            <person name="Ramstedt B."/>
            <person name="Tengel T."/>
            <person name="Larsson G."/>
            <person name="Wilczynska M."/>
        </authorList>
    </citation>
    <scope>DISULFIDE BOND</scope>
    <scope>SUBCELLULAR LOCATION</scope>
    <scope>MUTAGENESIS OF CYS-395</scope>
    <scope>TISSUE SPECIFICITY</scope>
</reference>
<organism>
    <name type="scientific">Homo sapiens</name>
    <name type="common">Human</name>
    <dbReference type="NCBI Taxonomy" id="9606"/>
    <lineage>
        <taxon>Eukaryota</taxon>
        <taxon>Metazoa</taxon>
        <taxon>Chordata</taxon>
        <taxon>Craniata</taxon>
        <taxon>Vertebrata</taxon>
        <taxon>Euteleostomi</taxon>
        <taxon>Mammalia</taxon>
        <taxon>Eutheria</taxon>
        <taxon>Euarchontoglires</taxon>
        <taxon>Primates</taxon>
        <taxon>Haplorrhini</taxon>
        <taxon>Catarrhini</taxon>
        <taxon>Hominidae</taxon>
        <taxon>Homo</taxon>
    </lineage>
</organism>
<dbReference type="EMBL" id="U35459">
    <property type="protein sequence ID" value="AAC50282.1"/>
    <property type="molecule type" value="mRNA"/>
</dbReference>
<dbReference type="EMBL" id="BC096217">
    <property type="protein sequence ID" value="AAH96217.1"/>
    <property type="molecule type" value="mRNA"/>
</dbReference>
<dbReference type="EMBL" id="BC096219">
    <property type="protein sequence ID" value="AAH96219.1"/>
    <property type="molecule type" value="mRNA"/>
</dbReference>
<dbReference type="EMBL" id="BC096220">
    <property type="protein sequence ID" value="AAH96220.1"/>
    <property type="molecule type" value="mRNA"/>
</dbReference>
<dbReference type="CCDS" id="CCDS11990.1"/>
<dbReference type="PIR" id="I39184">
    <property type="entry name" value="I39184"/>
</dbReference>
<dbReference type="RefSeq" id="NP_005015.1">
    <property type="nucleotide sequence ID" value="NM_005024.3"/>
</dbReference>
<dbReference type="RefSeq" id="XP_011524329.1">
    <property type="nucleotide sequence ID" value="XM_011526027.2"/>
</dbReference>
<dbReference type="SMR" id="P48595"/>
<dbReference type="BioGRID" id="111291">
    <property type="interactions" value="5"/>
</dbReference>
<dbReference type="FunCoup" id="P48595">
    <property type="interactions" value="59"/>
</dbReference>
<dbReference type="IntAct" id="P48595">
    <property type="interactions" value="3"/>
</dbReference>
<dbReference type="MINT" id="P48595"/>
<dbReference type="STRING" id="9606.ENSP00000238508"/>
<dbReference type="MEROPS" id="I04.015"/>
<dbReference type="iPTMnet" id="P48595"/>
<dbReference type="PhosphoSitePlus" id="P48595"/>
<dbReference type="SwissPalm" id="P48595"/>
<dbReference type="BioMuta" id="SERPINB10"/>
<dbReference type="DMDM" id="1345616"/>
<dbReference type="jPOST" id="P48595"/>
<dbReference type="MassIVE" id="P48595"/>
<dbReference type="PaxDb" id="9606-ENSP00000238508"/>
<dbReference type="PeptideAtlas" id="P48595"/>
<dbReference type="ProteomicsDB" id="55912"/>
<dbReference type="Antibodypedia" id="34913">
    <property type="antibodies" value="129 antibodies from 25 providers"/>
</dbReference>
<dbReference type="DNASU" id="5273"/>
<dbReference type="Ensembl" id="ENST00000238508.8">
    <property type="protein sequence ID" value="ENSP00000238508.3"/>
    <property type="gene ID" value="ENSG00000242550.7"/>
</dbReference>
<dbReference type="GeneID" id="5273"/>
<dbReference type="KEGG" id="hsa:5273"/>
<dbReference type="MANE-Select" id="ENST00000238508.8">
    <property type="protein sequence ID" value="ENSP00000238508.3"/>
    <property type="RefSeq nucleotide sequence ID" value="NM_005024.3"/>
    <property type="RefSeq protein sequence ID" value="NP_005015.1"/>
</dbReference>
<dbReference type="UCSC" id="uc010xev.3">
    <property type="organism name" value="human"/>
</dbReference>
<dbReference type="AGR" id="HGNC:8942"/>
<dbReference type="CTD" id="5273"/>
<dbReference type="DisGeNET" id="5273"/>
<dbReference type="GeneCards" id="SERPINB10"/>
<dbReference type="HGNC" id="HGNC:8942">
    <property type="gene designation" value="SERPINB10"/>
</dbReference>
<dbReference type="HPA" id="ENSG00000242550">
    <property type="expression patterns" value="Tissue enriched (bone)"/>
</dbReference>
<dbReference type="MIM" id="602058">
    <property type="type" value="gene"/>
</dbReference>
<dbReference type="neXtProt" id="NX_P48595"/>
<dbReference type="OpenTargets" id="ENSG00000242550"/>
<dbReference type="PharmGKB" id="PA35510"/>
<dbReference type="VEuPathDB" id="HostDB:ENSG00000242550"/>
<dbReference type="eggNOG" id="KOG2392">
    <property type="taxonomic scope" value="Eukaryota"/>
</dbReference>
<dbReference type="GeneTree" id="ENSGT00940000161205"/>
<dbReference type="HOGENOM" id="CLU_023330_0_2_1"/>
<dbReference type="InParanoid" id="P48595"/>
<dbReference type="OMA" id="THEDMME"/>
<dbReference type="OrthoDB" id="671595at2759"/>
<dbReference type="PAN-GO" id="P48595">
    <property type="GO annotations" value="3 GO annotations based on evolutionary models"/>
</dbReference>
<dbReference type="PhylomeDB" id="P48595"/>
<dbReference type="TreeFam" id="TF352619"/>
<dbReference type="PathwayCommons" id="P48595"/>
<dbReference type="Reactome" id="R-HSA-6798695">
    <property type="pathway name" value="Neutrophil degranulation"/>
</dbReference>
<dbReference type="SignaLink" id="P48595"/>
<dbReference type="BioGRID-ORCS" id="5273">
    <property type="hits" value="11 hits in 1150 CRISPR screens"/>
</dbReference>
<dbReference type="GenomeRNAi" id="5273"/>
<dbReference type="Pharos" id="P48595">
    <property type="development level" value="Tbio"/>
</dbReference>
<dbReference type="PRO" id="PR:P48595"/>
<dbReference type="Proteomes" id="UP000005640">
    <property type="component" value="Chromosome 18"/>
</dbReference>
<dbReference type="RNAct" id="P48595">
    <property type="molecule type" value="protein"/>
</dbReference>
<dbReference type="Bgee" id="ENSG00000242550">
    <property type="expression patterns" value="Expressed in bone marrow and 63 other cell types or tissues"/>
</dbReference>
<dbReference type="ExpressionAtlas" id="P48595">
    <property type="expression patterns" value="baseline and differential"/>
</dbReference>
<dbReference type="GO" id="GO:0005829">
    <property type="term" value="C:cytosol"/>
    <property type="evidence" value="ECO:0000314"/>
    <property type="project" value="HPA"/>
</dbReference>
<dbReference type="GO" id="GO:0005615">
    <property type="term" value="C:extracellular space"/>
    <property type="evidence" value="ECO:0000318"/>
    <property type="project" value="GO_Central"/>
</dbReference>
<dbReference type="GO" id="GO:0101003">
    <property type="term" value="C:ficolin-1-rich granule membrane"/>
    <property type="evidence" value="ECO:0000304"/>
    <property type="project" value="Reactome"/>
</dbReference>
<dbReference type="GO" id="GO:0005654">
    <property type="term" value="C:nucleoplasm"/>
    <property type="evidence" value="ECO:0000314"/>
    <property type="project" value="HPA"/>
</dbReference>
<dbReference type="GO" id="GO:0005886">
    <property type="term" value="C:plasma membrane"/>
    <property type="evidence" value="ECO:0000304"/>
    <property type="project" value="Reactome"/>
</dbReference>
<dbReference type="GO" id="GO:0030667">
    <property type="term" value="C:secretory granule membrane"/>
    <property type="evidence" value="ECO:0000304"/>
    <property type="project" value="Reactome"/>
</dbReference>
<dbReference type="GO" id="GO:0004867">
    <property type="term" value="F:serine-type endopeptidase inhibitor activity"/>
    <property type="evidence" value="ECO:0000318"/>
    <property type="project" value="GO_Central"/>
</dbReference>
<dbReference type="CDD" id="cd19569">
    <property type="entry name" value="serpinB10_bomapin"/>
    <property type="match status" value="1"/>
</dbReference>
<dbReference type="FunFam" id="2.10.310.10:FF:000001">
    <property type="entry name" value="Serpin family A member 1"/>
    <property type="match status" value="1"/>
</dbReference>
<dbReference type="FunFam" id="3.30.497.10:FF:000004">
    <property type="entry name" value="Serpin family B member 1"/>
    <property type="match status" value="1"/>
</dbReference>
<dbReference type="FunFam" id="2.30.39.10:FF:000001">
    <property type="entry name" value="Serpin family B member 2"/>
    <property type="match status" value="1"/>
</dbReference>
<dbReference type="Gene3D" id="2.30.39.10">
    <property type="entry name" value="Alpha-1-antitrypsin, domain 1"/>
    <property type="match status" value="1"/>
</dbReference>
<dbReference type="Gene3D" id="3.30.497.10">
    <property type="entry name" value="Antithrombin, subunit I, domain 2"/>
    <property type="match status" value="1"/>
</dbReference>
<dbReference type="InterPro" id="IPR023795">
    <property type="entry name" value="Serpin_CS"/>
</dbReference>
<dbReference type="InterPro" id="IPR023796">
    <property type="entry name" value="Serpin_dom"/>
</dbReference>
<dbReference type="InterPro" id="IPR000215">
    <property type="entry name" value="Serpin_fam"/>
</dbReference>
<dbReference type="InterPro" id="IPR036186">
    <property type="entry name" value="Serpin_sf"/>
</dbReference>
<dbReference type="InterPro" id="IPR042178">
    <property type="entry name" value="Serpin_sf_1"/>
</dbReference>
<dbReference type="InterPro" id="IPR042185">
    <property type="entry name" value="Serpin_sf_2"/>
</dbReference>
<dbReference type="PANTHER" id="PTHR11461">
    <property type="entry name" value="SERINE PROTEASE INHIBITOR, SERPIN"/>
    <property type="match status" value="1"/>
</dbReference>
<dbReference type="PANTHER" id="PTHR11461:SF175">
    <property type="entry name" value="SERPIN B10"/>
    <property type="match status" value="1"/>
</dbReference>
<dbReference type="Pfam" id="PF00079">
    <property type="entry name" value="Serpin"/>
    <property type="match status" value="1"/>
</dbReference>
<dbReference type="SMART" id="SM00093">
    <property type="entry name" value="SERPIN"/>
    <property type="match status" value="1"/>
</dbReference>
<dbReference type="SUPFAM" id="SSF56574">
    <property type="entry name" value="Serpins"/>
    <property type="match status" value="1"/>
</dbReference>
<dbReference type="PROSITE" id="PS00284">
    <property type="entry name" value="SERPIN"/>
    <property type="match status" value="1"/>
</dbReference>
<proteinExistence type="evidence at protein level"/>
<name>SPB10_HUMAN</name>
<gene>
    <name type="primary">SERPINB10</name>
    <name type="synonym">PI10</name>
</gene>
<feature type="chain" id="PRO_0000094114" description="Serpin B10">
    <location>
        <begin position="1"/>
        <end position="397"/>
    </location>
</feature>
<feature type="short sequence motif" description="Nuclear localization signal">
    <location>
        <begin position="74"/>
        <end position="77"/>
    </location>
</feature>
<feature type="site" description="Reactive bond" evidence="1">
    <location>
        <begin position="362"/>
        <end position="363"/>
    </location>
</feature>
<feature type="disulfide bond" description="Redox-active" evidence="4">
    <location>
        <begin position="68"/>
        <end position="395"/>
    </location>
</feature>
<feature type="sequence variant" id="VAR_051949" description="In dbSNP:rs17072097.">
    <original>S</original>
    <variation>A</variation>
    <location>
        <position position="3"/>
    </location>
</feature>
<feature type="sequence variant" id="VAR_024353" description="In dbSNP:rs8097425.">
    <original>I</original>
    <variation>M</variation>
    <location>
        <position position="41"/>
    </location>
</feature>
<feature type="sequence variant" id="VAR_024354" description="In dbSNP:rs724558.">
    <original>I</original>
    <variation>T</variation>
    <location>
        <position position="99"/>
    </location>
</feature>
<feature type="sequence variant" id="VAR_051950" description="In dbSNP:rs17072146.">
    <original>G</original>
    <variation>D</variation>
    <location>
        <position position="135"/>
    </location>
</feature>
<feature type="sequence variant" id="VAR_024355" description="In dbSNP:rs9967382.">
    <original>P</original>
    <variation>S</variation>
    <location>
        <position position="140"/>
    </location>
</feature>
<feature type="sequence variant" id="VAR_022116" description="In dbSNP:rs963075.">
    <original>R</original>
    <variation>C</variation>
    <location>
        <position position="246"/>
    </location>
</feature>
<feature type="sequence variant" id="VAR_051951" description="In dbSNP:rs35453062." evidence="3">
    <original>D</original>
    <variation>N</variation>
    <location>
        <position position="360"/>
    </location>
</feature>
<feature type="mutagenesis site" description="Abolishes nuclear localization.">
    <original>KKRK</original>
    <variation>AAAA</variation>
    <location>
        <begin position="74"/>
        <end position="77"/>
    </location>
</feature>
<feature type="mutagenesis site" description="No effect on cell proliferation." evidence="4">
    <original>C</original>
    <variation>S</variation>
    <location>
        <position position="395"/>
    </location>
</feature>
<keyword id="KW-0963">Cytoplasm</keyword>
<keyword id="KW-1015">Disulfide bond</keyword>
<keyword id="KW-0539">Nucleus</keyword>
<keyword id="KW-0646">Protease inhibitor</keyword>
<keyword id="KW-1267">Proteomics identification</keyword>
<keyword id="KW-1185">Reference proteome</keyword>
<keyword id="KW-0722">Serine protease inhibitor</keyword>
<evidence type="ECO:0000250" key="1"/>
<evidence type="ECO:0000269" key="2">
    <source>
    </source>
</evidence>
<evidence type="ECO:0000269" key="3">
    <source>
    </source>
</evidence>
<evidence type="ECO:0000269" key="4">
    <source>
    </source>
</evidence>
<evidence type="ECO:0000269" key="5">
    <source>
    </source>
</evidence>
<evidence type="ECO:0000305" key="6"/>
<sequence length="397" mass="45403">MDSLATSINQFALELSKKLAESAQGKNIFFSSWSISTSLTIVYLGAKGTTAAQMAQVLQFNRDQGVKCDPESEKKRKMEFNLSNSEEIHSDFQTLISEILKPNDDYLLKTANAIYGEKTYAFHNKYLEDMKTYFGAEPQPVNFVEASDQIRKDINSWVERQTEGKIQNLLPDDSVDSTTRMILVNALYFKGIWEHQFLVQNTTEKPFRINETTSKPVQMMFMKKKLHIFHIEKPKAVGLQLYYKSRDLSLLILLPEDINGLEQLEKAITYEKLNEWTSADMMELYEVQLHLPKFKLEDSYDLKSTLSSMGMSDAFSQSKADFSGMSSARNLFLSNVFHKAFVEINEQGTEAAAGSGSEIDIRIRVPSIEFNANHPFLFFIRHNKTNTILFYGRLCSP</sequence>
<comment type="function">
    <text evidence="2 5">Protease inhibitor that may play a role in the regulation of protease activities during hematopoiesis and apoptosis induced by TNF. May regulate protease activities in the cytoplasm and in the nucleus.</text>
</comment>
<comment type="subcellular location">
    <subcellularLocation>
        <location>Nucleus</location>
    </subcellularLocation>
    <subcellularLocation>
        <location>Cytoplasm</location>
    </subcellularLocation>
    <text>Mostly found in the nucleus.</text>
</comment>
<comment type="tissue specificity">
    <text evidence="4 5">Expressed specifically in myeloid cells and the bone marrow.</text>
</comment>
<comment type="similarity">
    <text evidence="6">Belongs to the serpin family. Ov-serpin subfamily.</text>
</comment>
<accession>P48595</accession>
<accession>Q4VAX4</accession>
<accession>Q4VAX7</accession>
<protein>
    <recommendedName>
        <fullName>Serpin B10</fullName>
    </recommendedName>
    <alternativeName>
        <fullName>Bomapin</fullName>
    </alternativeName>
    <alternativeName>
        <fullName>Peptidase inhibitor 10</fullName>
        <shortName>PI-10</shortName>
    </alternativeName>
</protein>